<feature type="chain" id="PRO_0000457931" description="C-type lectin domain-containing protein 38">
    <location>
        <begin position="1"/>
        <end position="382"/>
    </location>
</feature>
<feature type="topological domain" description="Cytoplasmic" evidence="8">
    <location>
        <begin position="1"/>
        <end position="40"/>
    </location>
</feature>
<feature type="transmembrane region" description="Helical" evidence="1">
    <location>
        <begin position="41"/>
        <end position="61"/>
    </location>
</feature>
<feature type="topological domain" description="Extracellular" evidence="8">
    <location>
        <begin position="62"/>
        <end position="382"/>
    </location>
</feature>
<feature type="domain" description="C-type lectin 1" evidence="2">
    <location>
        <begin position="129"/>
        <end position="250"/>
    </location>
</feature>
<feature type="domain" description="C-type lectin 2" evidence="2">
    <location>
        <begin position="264"/>
        <end position="377"/>
    </location>
</feature>
<feature type="region of interest" description="Disordered" evidence="4">
    <location>
        <begin position="97"/>
        <end position="116"/>
    </location>
</feature>
<feature type="compositionally biased region" description="Low complexity" evidence="4">
    <location>
        <begin position="100"/>
        <end position="116"/>
    </location>
</feature>
<feature type="glycosylation site" description="N-linked (GlcNAc...) asparagine" evidence="3">
    <location>
        <position position="108"/>
    </location>
</feature>
<feature type="glycosylation site" description="N-linked (GlcNAc...) asparagine" evidence="3">
    <location>
        <position position="189"/>
    </location>
</feature>
<feature type="disulfide bond" evidence="2">
    <location>
        <begin position="150"/>
        <end position="249"/>
    </location>
</feature>
<feature type="disulfide bond" evidence="2">
    <location>
        <begin position="223"/>
        <end position="241"/>
    </location>
</feature>
<feature type="disulfide bond" evidence="2">
    <location>
        <begin position="285"/>
        <end position="376"/>
    </location>
</feature>
<feature type="disulfide bond" evidence="2">
    <location>
        <begin position="348"/>
        <end position="368"/>
    </location>
</feature>
<keyword id="KW-1015">Disulfide bond</keyword>
<keyword id="KW-0325">Glycoprotein</keyword>
<keyword id="KW-0430">Lectin</keyword>
<keyword id="KW-0472">Membrane</keyword>
<keyword id="KW-1185">Reference proteome</keyword>
<keyword id="KW-0677">Repeat</keyword>
<keyword id="KW-0735">Signal-anchor</keyword>
<keyword id="KW-0812">Transmembrane</keyword>
<keyword id="KW-1133">Transmembrane helix</keyword>
<reference evidence="10" key="1">
    <citation type="journal article" date="1998" name="Science">
        <title>Genome sequence of the nematode C. elegans: a platform for investigating biology.</title>
        <authorList>
            <consortium name="The C. elegans sequencing consortium"/>
        </authorList>
    </citation>
    <scope>NUCLEOTIDE SEQUENCE [LARGE SCALE GENOMIC DNA]</scope>
    <source>
        <strain evidence="10">Bristol N2</strain>
    </source>
</reference>
<reference evidence="7" key="2">
    <citation type="journal article" date="2008" name="J. Neurosci.">
        <title>CLEC-38, a transmembrane protein with C-type lectin-like domains, negatively regulates UNC-40-mediated axon outgrowth and promotes presynaptic development in Caenorhabditis elegans.</title>
        <authorList>
            <person name="Kulkarni G."/>
            <person name="Li H."/>
            <person name="Wadsworth W.G."/>
        </authorList>
    </citation>
    <scope>FUNCTION</scope>
    <scope>SUBCELLULAR LOCATION</scope>
    <scope>DEVELOPMENTAL STAGE</scope>
    <scope>DISRUPTION PHENOTYPE</scope>
</reference>
<proteinExistence type="evidence at transcript level"/>
<sequence length="382" mass="42702">MAIFYDDPLERLNQPIKTKSYRKKQVVQRVHVFIFDNWKLILLGILNLIFLIIAIVFAILFFVGSADCAQLPDYTTSPASQLTTSAISSRTSEVQTNAITTTQGTPSNKTSTTTPSTSKVICASGFTLVGTKCGKLVSSNQPRTEADSICKGYGGSTLFSVRNEQETRDMLDFVKDSNIDFLWTGLVCNQTARTSCIWDVKSGTTADYNNFADGFPNVVYGYCIYFIVTGNSAGQWGSEQCSQLMNFVCELPTTIRDPDCKYNYNKNCYIRFDITLTIPQAQRFCNEKGADLVSIHSANENRFILTIYDIHGQILLGGLAPAVDFIVWLDGSPTTYSNLLYFYDTRSCVLMTVARGGPYDGDWYTMNCNVQEFFLCKRAIDF</sequence>
<accession>O45824</accession>
<evidence type="ECO:0000255" key="1"/>
<evidence type="ECO:0000255" key="2">
    <source>
        <dbReference type="PROSITE-ProRule" id="PRU00040"/>
    </source>
</evidence>
<evidence type="ECO:0000255" key="3">
    <source>
        <dbReference type="PROSITE-ProRule" id="PRU00498"/>
    </source>
</evidence>
<evidence type="ECO:0000256" key="4">
    <source>
        <dbReference type="SAM" id="MobiDB-lite"/>
    </source>
</evidence>
<evidence type="ECO:0000269" key="5">
    <source>
    </source>
</evidence>
<evidence type="ECO:0000303" key="6">
    <source>
    </source>
</evidence>
<evidence type="ECO:0000305" key="7"/>
<evidence type="ECO:0000305" key="8">
    <source>
    </source>
</evidence>
<evidence type="ECO:0000312" key="9">
    <source>
        <dbReference type="EMBL" id="CAB04828.2"/>
    </source>
</evidence>
<evidence type="ECO:0000312" key="10">
    <source>
        <dbReference type="Proteomes" id="UP000001940"/>
    </source>
</evidence>
<evidence type="ECO:0000312" key="11">
    <source>
        <dbReference type="WormBase" id="T25E12.10"/>
    </source>
</evidence>
<gene>
    <name evidence="9 11" type="primary">clec-38</name>
    <name evidence="11" type="ORF">T25E12.10</name>
</gene>
<name>CL38_CAEEL</name>
<dbReference type="EMBL" id="BX284605">
    <property type="protein sequence ID" value="CAB04828.2"/>
    <property type="molecule type" value="Genomic_DNA"/>
</dbReference>
<dbReference type="PIR" id="T25280">
    <property type="entry name" value="T25280"/>
</dbReference>
<dbReference type="RefSeq" id="NP_507233.2">
    <property type="nucleotide sequence ID" value="NM_074832.4"/>
</dbReference>
<dbReference type="SMR" id="O45824"/>
<dbReference type="FunCoup" id="O45824">
    <property type="interactions" value="10"/>
</dbReference>
<dbReference type="STRING" id="6239.T25E12.10.1"/>
<dbReference type="PaxDb" id="6239-T25E12.10"/>
<dbReference type="EnsemblMetazoa" id="T25E12.10.1">
    <property type="protein sequence ID" value="T25E12.10.1"/>
    <property type="gene ID" value="WBGene00012025"/>
</dbReference>
<dbReference type="GeneID" id="188900"/>
<dbReference type="KEGG" id="cel:CELE_T25E12.10"/>
<dbReference type="UCSC" id="T25E12.10">
    <property type="organism name" value="c. elegans"/>
</dbReference>
<dbReference type="AGR" id="WB:WBGene00012025"/>
<dbReference type="CTD" id="188900"/>
<dbReference type="WormBase" id="T25E12.10">
    <property type="protein sequence ID" value="CE47844"/>
    <property type="gene ID" value="WBGene00012025"/>
    <property type="gene designation" value="clec-38"/>
</dbReference>
<dbReference type="eggNOG" id="KOG4297">
    <property type="taxonomic scope" value="Eukaryota"/>
</dbReference>
<dbReference type="GeneTree" id="ENSGT00940000162900"/>
<dbReference type="HOGENOM" id="CLU_037161_1_0_1"/>
<dbReference type="InParanoid" id="O45824"/>
<dbReference type="OMA" id="TTINYWI"/>
<dbReference type="OrthoDB" id="5833759at2759"/>
<dbReference type="PhylomeDB" id="O45824"/>
<dbReference type="PRO" id="PR:O45824"/>
<dbReference type="Proteomes" id="UP000001940">
    <property type="component" value="Chromosome V"/>
</dbReference>
<dbReference type="Bgee" id="WBGene00012025">
    <property type="expression patterns" value="Expressed in larva"/>
</dbReference>
<dbReference type="GO" id="GO:0016020">
    <property type="term" value="C:membrane"/>
    <property type="evidence" value="ECO:0007669"/>
    <property type="project" value="UniProtKB-SubCell"/>
</dbReference>
<dbReference type="GO" id="GO:0030246">
    <property type="term" value="F:carbohydrate binding"/>
    <property type="evidence" value="ECO:0007669"/>
    <property type="project" value="UniProtKB-KW"/>
</dbReference>
<dbReference type="GO" id="GO:0033563">
    <property type="term" value="P:dorsal/ventral axon guidance"/>
    <property type="evidence" value="ECO:0000316"/>
    <property type="project" value="UniProtKB"/>
</dbReference>
<dbReference type="GO" id="GO:0008045">
    <property type="term" value="P:motor neuron axon guidance"/>
    <property type="evidence" value="ECO:0000316"/>
    <property type="project" value="UniProtKB"/>
</dbReference>
<dbReference type="GO" id="GO:0048843">
    <property type="term" value="P:negative regulation of axon extension involved in axon guidance"/>
    <property type="evidence" value="ECO:0000315"/>
    <property type="project" value="UniProtKB"/>
</dbReference>
<dbReference type="GO" id="GO:0048671">
    <property type="term" value="P:negative regulation of collateral sprouting"/>
    <property type="evidence" value="ECO:0000315"/>
    <property type="project" value="UniProtKB"/>
</dbReference>
<dbReference type="GO" id="GO:0010629">
    <property type="term" value="P:negative regulation of gene expression"/>
    <property type="evidence" value="ECO:0000315"/>
    <property type="project" value="UniProtKB"/>
</dbReference>
<dbReference type="GO" id="GO:1905490">
    <property type="term" value="P:negative regulation of sensory neuron axon guidance"/>
    <property type="evidence" value="ECO:0000315"/>
    <property type="project" value="UniProtKB"/>
</dbReference>
<dbReference type="GO" id="GO:1905815">
    <property type="term" value="P:regulation of dorsal/ventral axon guidance"/>
    <property type="evidence" value="ECO:0000316"/>
    <property type="project" value="UniProtKB"/>
</dbReference>
<dbReference type="GO" id="GO:1905812">
    <property type="term" value="P:regulation of motor neuron axon guidance"/>
    <property type="evidence" value="ECO:0000316"/>
    <property type="project" value="UniProtKB"/>
</dbReference>
<dbReference type="GO" id="GO:1905489">
    <property type="term" value="P:regulation of sensory neuron axon guidance"/>
    <property type="evidence" value="ECO:0000316"/>
    <property type="project" value="UniProtKB"/>
</dbReference>
<dbReference type="GO" id="GO:0097374">
    <property type="term" value="P:sensory neuron axon guidance"/>
    <property type="evidence" value="ECO:0000316"/>
    <property type="project" value="UniProtKB"/>
</dbReference>
<dbReference type="GO" id="GO:0097479">
    <property type="term" value="P:synaptic vesicle localization"/>
    <property type="evidence" value="ECO:0000315"/>
    <property type="project" value="UniProtKB"/>
</dbReference>
<dbReference type="CDD" id="cd00037">
    <property type="entry name" value="CLECT"/>
    <property type="match status" value="2"/>
</dbReference>
<dbReference type="FunFam" id="3.10.100.10:FF:000152">
    <property type="entry name" value="C-type LECtin"/>
    <property type="match status" value="1"/>
</dbReference>
<dbReference type="Gene3D" id="3.10.100.10">
    <property type="entry name" value="Mannose-Binding Protein A, subunit A"/>
    <property type="match status" value="2"/>
</dbReference>
<dbReference type="InterPro" id="IPR001304">
    <property type="entry name" value="C-type_lectin-like"/>
</dbReference>
<dbReference type="InterPro" id="IPR016186">
    <property type="entry name" value="C-type_lectin-like/link_sf"/>
</dbReference>
<dbReference type="InterPro" id="IPR018378">
    <property type="entry name" value="C-type_lectin_CS"/>
</dbReference>
<dbReference type="InterPro" id="IPR016187">
    <property type="entry name" value="CTDL_fold"/>
</dbReference>
<dbReference type="InterPro" id="IPR050976">
    <property type="entry name" value="Snaclec"/>
</dbReference>
<dbReference type="PANTHER" id="PTHR22991:SF44">
    <property type="entry name" value="C-TYPE LECTIN-RELATED"/>
    <property type="match status" value="1"/>
</dbReference>
<dbReference type="PANTHER" id="PTHR22991">
    <property type="entry name" value="PROTEIN CBG13490"/>
    <property type="match status" value="1"/>
</dbReference>
<dbReference type="Pfam" id="PF00059">
    <property type="entry name" value="Lectin_C"/>
    <property type="match status" value="2"/>
</dbReference>
<dbReference type="SMART" id="SM00034">
    <property type="entry name" value="CLECT"/>
    <property type="match status" value="2"/>
</dbReference>
<dbReference type="SUPFAM" id="SSF56436">
    <property type="entry name" value="C-type lectin-like"/>
    <property type="match status" value="2"/>
</dbReference>
<dbReference type="PROSITE" id="PS00615">
    <property type="entry name" value="C_TYPE_LECTIN_1"/>
    <property type="match status" value="1"/>
</dbReference>
<dbReference type="PROSITE" id="PS50041">
    <property type="entry name" value="C_TYPE_LECTIN_2"/>
    <property type="match status" value="2"/>
</dbReference>
<protein>
    <recommendedName>
        <fullName evidence="7">C-type lectin domain-containing protein 38</fullName>
    </recommendedName>
</protein>
<organism evidence="10">
    <name type="scientific">Caenorhabditis elegans</name>
    <dbReference type="NCBI Taxonomy" id="6239"/>
    <lineage>
        <taxon>Eukaryota</taxon>
        <taxon>Metazoa</taxon>
        <taxon>Ecdysozoa</taxon>
        <taxon>Nematoda</taxon>
        <taxon>Chromadorea</taxon>
        <taxon>Rhabditida</taxon>
        <taxon>Rhabditina</taxon>
        <taxon>Rhabditomorpha</taxon>
        <taxon>Rhabditoidea</taxon>
        <taxon>Rhabditidae</taxon>
        <taxon>Peloderinae</taxon>
        <taxon>Caenorhabditis</taxon>
    </lineage>
</organism>
<comment type="function">
    <text evidence="5">Involved in negative modulation of unc-40-mediated axon outgrowth (PubMed:18434533). Required for proper presynaptic development in axons that have reached their targets (PubMed:18434533). May function in concert with E3 ubiquitin-protein ligase rpm-1 in regulating axon outgrowth (PubMed:18434533).</text>
</comment>
<comment type="subcellular location">
    <subcellularLocation>
        <location evidence="6">Membrane</location>
        <topology evidence="1">Single-pass type II membrane protein</topology>
    </subcellularLocation>
</comment>
<comment type="tissue specificity">
    <text evidence="5">Expressed in ventral cord motor neurons and PLM touch neurons.</text>
</comment>
<comment type="developmental stage">
    <text evidence="5">Expressed from threefold embryo stage, in the nervous system and intestine, and persists through adulthood (PubMed:18434533). Expressed in head neurons of embryos and adults (PubMed:18434533).</text>
</comment>
<comment type="disruption phenotype">
    <text evidence="5">Suppresses motor neuron dorsal guidance defects in an unc-6 mutant background (PubMed:18434533). Mild shorter and stouter phenotype (PubMed:18434533).</text>
</comment>